<proteinExistence type="inferred from homology"/>
<organism>
    <name type="scientific">Trichodesmium erythraeum (strain IMS101)</name>
    <dbReference type="NCBI Taxonomy" id="203124"/>
    <lineage>
        <taxon>Bacteria</taxon>
        <taxon>Bacillati</taxon>
        <taxon>Cyanobacteriota</taxon>
        <taxon>Cyanophyceae</taxon>
        <taxon>Oscillatoriophycideae</taxon>
        <taxon>Oscillatoriales</taxon>
        <taxon>Microcoleaceae</taxon>
        <taxon>Trichodesmium</taxon>
    </lineage>
</organism>
<feature type="chain" id="PRO_0000298309" description="Photosystem II reaction center protein I">
    <location>
        <begin position="1"/>
        <end position="38"/>
    </location>
</feature>
<feature type="transmembrane region" description="Helical" evidence="1">
    <location>
        <begin position="4"/>
        <end position="24"/>
    </location>
</feature>
<keyword id="KW-0472">Membrane</keyword>
<keyword id="KW-0602">Photosynthesis</keyword>
<keyword id="KW-0604">Photosystem II</keyword>
<keyword id="KW-0674">Reaction center</keyword>
<keyword id="KW-0793">Thylakoid</keyword>
<keyword id="KW-0812">Transmembrane</keyword>
<keyword id="KW-1133">Transmembrane helix</keyword>
<protein>
    <recommendedName>
        <fullName evidence="1">Photosystem II reaction center protein I</fullName>
        <shortName evidence="1">PSII-I</shortName>
    </recommendedName>
    <alternativeName>
        <fullName evidence="1">PSII 4.4 kDa protein</fullName>
    </alternativeName>
</protein>
<accession>Q10ZK6</accession>
<name>PSBI_TRIEI</name>
<evidence type="ECO:0000255" key="1">
    <source>
        <dbReference type="HAMAP-Rule" id="MF_01316"/>
    </source>
</evidence>
<gene>
    <name evidence="1" type="primary">psbI</name>
    <name type="ordered locus">Tery_3194</name>
</gene>
<comment type="function">
    <text evidence="1">One of the components of the core complex of photosystem II (PSII), required for its stability and/or assembly. PSII is a light-driven water:plastoquinone oxidoreductase that uses light energy to abstract electrons from H(2)O, generating O(2) and a proton gradient subsequently used for ATP formation. It consists of a core antenna complex that captures photons, and an electron transfer chain that converts photonic excitation into a charge separation.</text>
</comment>
<comment type="subunit">
    <text evidence="1">PSII is composed of 1 copy each of membrane proteins PsbA, PsbB, PsbC, PsbD, PsbE, PsbF, PsbH, PsbI, PsbJ, PsbK, PsbL, PsbM, PsbT, PsbX, PsbY, PsbZ, Psb30/Ycf12, peripheral proteins PsbO, CyanoQ (PsbQ), PsbU, PsbV and a large number of cofactors. It forms dimeric complexes.</text>
</comment>
<comment type="subcellular location">
    <subcellularLocation>
        <location evidence="1">Cellular thylakoid membrane</location>
        <topology evidence="1">Single-pass membrane protein</topology>
    </subcellularLocation>
</comment>
<comment type="similarity">
    <text evidence="1">Belongs to the PsbI family.</text>
</comment>
<sequence length="38" mass="4327">MLTLKIVVNIVVLFFVLLFIFGFLSNDPARNPSGRDME</sequence>
<dbReference type="EMBL" id="CP000393">
    <property type="protein sequence ID" value="ABG52318.1"/>
    <property type="molecule type" value="Genomic_DNA"/>
</dbReference>
<dbReference type="RefSeq" id="WP_011612663.1">
    <property type="nucleotide sequence ID" value="NC_008312.1"/>
</dbReference>
<dbReference type="SMR" id="Q10ZK6"/>
<dbReference type="STRING" id="203124.Tery_3194"/>
<dbReference type="KEGG" id="ter:Tery_3194"/>
<dbReference type="eggNOG" id="ENOG5033CII">
    <property type="taxonomic scope" value="Bacteria"/>
</dbReference>
<dbReference type="HOGENOM" id="CLU_212150_0_0_3"/>
<dbReference type="GO" id="GO:0009539">
    <property type="term" value="C:photosystem II reaction center"/>
    <property type="evidence" value="ECO:0007669"/>
    <property type="project" value="InterPro"/>
</dbReference>
<dbReference type="GO" id="GO:0031676">
    <property type="term" value="C:plasma membrane-derived thylakoid membrane"/>
    <property type="evidence" value="ECO:0007669"/>
    <property type="project" value="UniProtKB-SubCell"/>
</dbReference>
<dbReference type="GO" id="GO:0015979">
    <property type="term" value="P:photosynthesis"/>
    <property type="evidence" value="ECO:0007669"/>
    <property type="project" value="UniProtKB-UniRule"/>
</dbReference>
<dbReference type="HAMAP" id="MF_01316">
    <property type="entry name" value="PSII_PsbI"/>
    <property type="match status" value="1"/>
</dbReference>
<dbReference type="InterPro" id="IPR003686">
    <property type="entry name" value="PSII_PsbI"/>
</dbReference>
<dbReference type="InterPro" id="IPR037271">
    <property type="entry name" value="PSII_PsbI_sf"/>
</dbReference>
<dbReference type="NCBIfam" id="NF002735">
    <property type="entry name" value="PRK02655.1"/>
    <property type="match status" value="1"/>
</dbReference>
<dbReference type="PANTHER" id="PTHR35772">
    <property type="entry name" value="PHOTOSYSTEM II REACTION CENTER PROTEIN I"/>
    <property type="match status" value="1"/>
</dbReference>
<dbReference type="PANTHER" id="PTHR35772:SF1">
    <property type="entry name" value="PHOTOSYSTEM II REACTION CENTER PROTEIN I"/>
    <property type="match status" value="1"/>
</dbReference>
<dbReference type="Pfam" id="PF02532">
    <property type="entry name" value="PsbI"/>
    <property type="match status" value="1"/>
</dbReference>
<dbReference type="SUPFAM" id="SSF161041">
    <property type="entry name" value="Photosystem II reaction center protein I, PsbI"/>
    <property type="match status" value="1"/>
</dbReference>
<reference key="1">
    <citation type="journal article" date="2015" name="Proc. Natl. Acad. Sci. U.S.A.">
        <title>Trichodesmium genome maintains abundant, widespread noncoding DNA in situ, despite oligotrophic lifestyle.</title>
        <authorList>
            <person name="Walworth N."/>
            <person name="Pfreundt U."/>
            <person name="Nelson W.C."/>
            <person name="Mincer T."/>
            <person name="Heidelberg J.F."/>
            <person name="Fu F."/>
            <person name="Waterbury J.B."/>
            <person name="Glavina del Rio T."/>
            <person name="Goodwin L."/>
            <person name="Kyrpides N.C."/>
            <person name="Land M.L."/>
            <person name="Woyke T."/>
            <person name="Hutchins D.A."/>
            <person name="Hess W.R."/>
            <person name="Webb E.A."/>
        </authorList>
    </citation>
    <scope>NUCLEOTIDE SEQUENCE [LARGE SCALE GENOMIC DNA]</scope>
    <source>
        <strain>IMS101</strain>
    </source>
</reference>